<dbReference type="EMBL" id="CP000937">
    <property type="protein sequence ID" value="ABZ87578.1"/>
    <property type="molecule type" value="Genomic_DNA"/>
</dbReference>
<dbReference type="SMR" id="B0TY17"/>
<dbReference type="KEGG" id="fph:Fphi_1353"/>
<dbReference type="eggNOG" id="COG0333">
    <property type="taxonomic scope" value="Bacteria"/>
</dbReference>
<dbReference type="HOGENOM" id="CLU_129084_2_1_6"/>
<dbReference type="GO" id="GO:0015934">
    <property type="term" value="C:large ribosomal subunit"/>
    <property type="evidence" value="ECO:0007669"/>
    <property type="project" value="InterPro"/>
</dbReference>
<dbReference type="GO" id="GO:0003735">
    <property type="term" value="F:structural constituent of ribosome"/>
    <property type="evidence" value="ECO:0007669"/>
    <property type="project" value="InterPro"/>
</dbReference>
<dbReference type="GO" id="GO:0006412">
    <property type="term" value="P:translation"/>
    <property type="evidence" value="ECO:0007669"/>
    <property type="project" value="UniProtKB-UniRule"/>
</dbReference>
<dbReference type="HAMAP" id="MF_00340">
    <property type="entry name" value="Ribosomal_bL32"/>
    <property type="match status" value="1"/>
</dbReference>
<dbReference type="InterPro" id="IPR002677">
    <property type="entry name" value="Ribosomal_bL32"/>
</dbReference>
<dbReference type="InterPro" id="IPR044957">
    <property type="entry name" value="Ribosomal_bL32_bact"/>
</dbReference>
<dbReference type="InterPro" id="IPR011332">
    <property type="entry name" value="Ribosomal_zn-bd"/>
</dbReference>
<dbReference type="NCBIfam" id="TIGR01031">
    <property type="entry name" value="rpmF_bact"/>
    <property type="match status" value="1"/>
</dbReference>
<dbReference type="PANTHER" id="PTHR35534">
    <property type="entry name" value="50S RIBOSOMAL PROTEIN L32"/>
    <property type="match status" value="1"/>
</dbReference>
<dbReference type="PANTHER" id="PTHR35534:SF1">
    <property type="entry name" value="LARGE RIBOSOMAL SUBUNIT PROTEIN BL32"/>
    <property type="match status" value="1"/>
</dbReference>
<dbReference type="Pfam" id="PF01783">
    <property type="entry name" value="Ribosomal_L32p"/>
    <property type="match status" value="1"/>
</dbReference>
<dbReference type="SUPFAM" id="SSF57829">
    <property type="entry name" value="Zn-binding ribosomal proteins"/>
    <property type="match status" value="1"/>
</dbReference>
<gene>
    <name evidence="1" type="primary">rpmF</name>
    <name type="ordered locus">Fphi_1353</name>
</gene>
<proteinExistence type="inferred from homology"/>
<name>RL32_FRAP2</name>
<reference key="1">
    <citation type="submission" date="2007-12" db="EMBL/GenBank/DDBJ databases">
        <title>Complete sequence of chromosome of Francisella philomiragia subsp. philomiragia ATCC 25017.</title>
        <authorList>
            <consortium name="US DOE Joint Genome Institute"/>
            <person name="Copeland A."/>
            <person name="Lucas S."/>
            <person name="Lapidus A."/>
            <person name="Barry K."/>
            <person name="Detter J.C."/>
            <person name="Glavina del Rio T."/>
            <person name="Hammon N."/>
            <person name="Israni S."/>
            <person name="Dalin E."/>
            <person name="Tice H."/>
            <person name="Pitluck S."/>
            <person name="Chain P."/>
            <person name="Malfatti S."/>
            <person name="Shin M."/>
            <person name="Vergez L."/>
            <person name="Schmutz J."/>
            <person name="Larimer F."/>
            <person name="Land M."/>
            <person name="Hauser L."/>
            <person name="Richardson P."/>
        </authorList>
    </citation>
    <scope>NUCLEOTIDE SEQUENCE [LARGE SCALE GENOMIC DNA]</scope>
    <source>
        <strain>ATCC 25017 / CCUG 19701 / FSC 153 / O#319-036</strain>
    </source>
</reference>
<organism>
    <name type="scientific">Francisella philomiragia subsp. philomiragia (strain ATCC 25017 / CCUG 19701 / FSC 153 / O#319-036)</name>
    <dbReference type="NCBI Taxonomy" id="484022"/>
    <lineage>
        <taxon>Bacteria</taxon>
        <taxon>Pseudomonadati</taxon>
        <taxon>Pseudomonadota</taxon>
        <taxon>Gammaproteobacteria</taxon>
        <taxon>Thiotrichales</taxon>
        <taxon>Francisellaceae</taxon>
        <taxon>Francisella</taxon>
    </lineage>
</organism>
<keyword id="KW-0687">Ribonucleoprotein</keyword>
<keyword id="KW-0689">Ribosomal protein</keyword>
<sequence length="60" mass="6794">MAVQQVKKSRSKRDMRRSHDSLTGPTLSTDKSTGELHLRHHVSPNGFYKGKKVVDTKSED</sequence>
<protein>
    <recommendedName>
        <fullName evidence="1">Large ribosomal subunit protein bL32</fullName>
    </recommendedName>
    <alternativeName>
        <fullName evidence="3">50S ribosomal protein L32</fullName>
    </alternativeName>
</protein>
<evidence type="ECO:0000255" key="1">
    <source>
        <dbReference type="HAMAP-Rule" id="MF_00340"/>
    </source>
</evidence>
<evidence type="ECO:0000256" key="2">
    <source>
        <dbReference type="SAM" id="MobiDB-lite"/>
    </source>
</evidence>
<evidence type="ECO:0000305" key="3"/>
<accession>B0TY17</accession>
<feature type="chain" id="PRO_1000079330" description="Large ribosomal subunit protein bL32">
    <location>
        <begin position="1"/>
        <end position="60"/>
    </location>
</feature>
<feature type="region of interest" description="Disordered" evidence="2">
    <location>
        <begin position="1"/>
        <end position="60"/>
    </location>
</feature>
<feature type="compositionally biased region" description="Basic residues" evidence="2">
    <location>
        <begin position="7"/>
        <end position="16"/>
    </location>
</feature>
<comment type="similarity">
    <text evidence="1">Belongs to the bacterial ribosomal protein bL32 family.</text>
</comment>